<evidence type="ECO:0000255" key="1">
    <source>
        <dbReference type="HAMAP-Rule" id="MF_00019"/>
    </source>
</evidence>
<sequence>MTRLTLALDVMGGDFGPSVTVPAALQALNSNSQLTLLLVGDPDAITPLLAKADFEQRSRLQIIPAQSVIASDARPAQAIRSSRGSSMRVALELVKEGRAEACVSAGNTGALMGLAKLLLKPIEGIERPALVTVLPHQQKGKTVVLDLGANVDCDSTMLVQFAVMGAVLAEEVVGMTNPRVALLNIGEEEMKGLSSIRDAAAVLKTLPSLNYIGYLEANELLTGKTDVLVCDGFTGNVTLKTMEGVVRMFLSLLKSQGEGKKRSWWLLLLKRWLQKSLARRFSHLNPDQYNGACLLGLRGSVIKSHGAANQRAFSVAIEQAVQAVQRQIPQRIAARLESLYPAGFALPESDSDVNSRQQSGTNGHD</sequence>
<organism>
    <name type="scientific">Klebsiella pneumoniae (strain 342)</name>
    <dbReference type="NCBI Taxonomy" id="507522"/>
    <lineage>
        <taxon>Bacteria</taxon>
        <taxon>Pseudomonadati</taxon>
        <taxon>Pseudomonadota</taxon>
        <taxon>Gammaproteobacteria</taxon>
        <taxon>Enterobacterales</taxon>
        <taxon>Enterobacteriaceae</taxon>
        <taxon>Klebsiella/Raoultella group</taxon>
        <taxon>Klebsiella</taxon>
        <taxon>Klebsiella pneumoniae complex</taxon>
    </lineage>
</organism>
<reference key="1">
    <citation type="journal article" date="2008" name="PLoS Genet.">
        <title>Complete genome sequence of the N2-fixing broad host range endophyte Klebsiella pneumoniae 342 and virulence predictions verified in mice.</title>
        <authorList>
            <person name="Fouts D.E."/>
            <person name="Tyler H.L."/>
            <person name="DeBoy R.T."/>
            <person name="Daugherty S."/>
            <person name="Ren Q."/>
            <person name="Badger J.H."/>
            <person name="Durkin A.S."/>
            <person name="Huot H."/>
            <person name="Shrivastava S."/>
            <person name="Kothari S."/>
            <person name="Dodson R.J."/>
            <person name="Mohamoud Y."/>
            <person name="Khouri H."/>
            <person name="Roesch L.F.W."/>
            <person name="Krogfelt K.A."/>
            <person name="Struve C."/>
            <person name="Triplett E.W."/>
            <person name="Methe B.A."/>
        </authorList>
    </citation>
    <scope>NUCLEOTIDE SEQUENCE [LARGE SCALE GENOMIC DNA]</scope>
    <source>
        <strain>342</strain>
    </source>
</reference>
<comment type="function">
    <text evidence="1">Catalyzes the reversible formation of acyl-phosphate (acyl-PO(4)) from acyl-[acyl-carrier-protein] (acyl-ACP). This enzyme utilizes acyl-ACP as fatty acyl donor, but not acyl-CoA.</text>
</comment>
<comment type="catalytic activity">
    <reaction evidence="1">
        <text>a fatty acyl-[ACP] + phosphate = an acyl phosphate + holo-[ACP]</text>
        <dbReference type="Rhea" id="RHEA:42292"/>
        <dbReference type="Rhea" id="RHEA-COMP:9685"/>
        <dbReference type="Rhea" id="RHEA-COMP:14125"/>
        <dbReference type="ChEBI" id="CHEBI:43474"/>
        <dbReference type="ChEBI" id="CHEBI:59918"/>
        <dbReference type="ChEBI" id="CHEBI:64479"/>
        <dbReference type="ChEBI" id="CHEBI:138651"/>
        <dbReference type="EC" id="2.3.1.274"/>
    </reaction>
</comment>
<comment type="pathway">
    <text evidence="1">Lipid metabolism; phospholipid metabolism.</text>
</comment>
<comment type="subunit">
    <text evidence="1">Homodimer. Probably interacts with PlsY.</text>
</comment>
<comment type="subcellular location">
    <subcellularLocation>
        <location evidence="1">Cytoplasm</location>
    </subcellularLocation>
    <text evidence="1">Associated with the membrane possibly through PlsY.</text>
</comment>
<comment type="similarity">
    <text evidence="1">Belongs to the PlsX family.</text>
</comment>
<protein>
    <recommendedName>
        <fullName evidence="1">Phosphate acyltransferase</fullName>
        <ecNumber evidence="1">2.3.1.274</ecNumber>
    </recommendedName>
    <alternativeName>
        <fullName evidence="1">Acyl-ACP phosphotransacylase</fullName>
    </alternativeName>
    <alternativeName>
        <fullName evidence="1">Acyl-[acyl-carrier-protein]--phosphate acyltransferase</fullName>
    </alternativeName>
    <alternativeName>
        <fullName evidence="1">Phosphate-acyl-ACP acyltransferase</fullName>
    </alternativeName>
</protein>
<keyword id="KW-0963">Cytoplasm</keyword>
<keyword id="KW-0444">Lipid biosynthesis</keyword>
<keyword id="KW-0443">Lipid metabolism</keyword>
<keyword id="KW-0594">Phospholipid biosynthesis</keyword>
<keyword id="KW-1208">Phospholipid metabolism</keyword>
<keyword id="KW-0808">Transferase</keyword>
<proteinExistence type="inferred from homology"/>
<name>PLSX_KLEP3</name>
<feature type="chain" id="PRO_1000089916" description="Phosphate acyltransferase">
    <location>
        <begin position="1"/>
        <end position="365"/>
    </location>
</feature>
<accession>B5XXI0</accession>
<gene>
    <name evidence="1" type="primary">plsX</name>
    <name type="ordered locus">KPK_3468</name>
</gene>
<dbReference type="EC" id="2.3.1.274" evidence="1"/>
<dbReference type="EMBL" id="CP000964">
    <property type="protein sequence ID" value="ACI10178.1"/>
    <property type="molecule type" value="Genomic_DNA"/>
</dbReference>
<dbReference type="SMR" id="B5XXI0"/>
<dbReference type="KEGG" id="kpe:KPK_3468"/>
<dbReference type="HOGENOM" id="CLU_039379_1_0_6"/>
<dbReference type="UniPathway" id="UPA00085"/>
<dbReference type="Proteomes" id="UP000001734">
    <property type="component" value="Chromosome"/>
</dbReference>
<dbReference type="GO" id="GO:0005737">
    <property type="term" value="C:cytoplasm"/>
    <property type="evidence" value="ECO:0007669"/>
    <property type="project" value="UniProtKB-SubCell"/>
</dbReference>
<dbReference type="GO" id="GO:0043811">
    <property type="term" value="F:phosphate:acyl-[acyl carrier protein] acyltransferase activity"/>
    <property type="evidence" value="ECO:0007669"/>
    <property type="project" value="UniProtKB-UniRule"/>
</dbReference>
<dbReference type="GO" id="GO:0006633">
    <property type="term" value="P:fatty acid biosynthetic process"/>
    <property type="evidence" value="ECO:0007669"/>
    <property type="project" value="UniProtKB-UniRule"/>
</dbReference>
<dbReference type="GO" id="GO:0008654">
    <property type="term" value="P:phospholipid biosynthetic process"/>
    <property type="evidence" value="ECO:0007669"/>
    <property type="project" value="UniProtKB-KW"/>
</dbReference>
<dbReference type="FunFam" id="3.40.718.10:FF:000008">
    <property type="entry name" value="Phosphate acyltransferase"/>
    <property type="match status" value="1"/>
</dbReference>
<dbReference type="Gene3D" id="3.40.718.10">
    <property type="entry name" value="Isopropylmalate Dehydrogenase"/>
    <property type="match status" value="1"/>
</dbReference>
<dbReference type="HAMAP" id="MF_00019">
    <property type="entry name" value="PlsX"/>
    <property type="match status" value="1"/>
</dbReference>
<dbReference type="InterPro" id="IPR003664">
    <property type="entry name" value="FA_synthesis"/>
</dbReference>
<dbReference type="InterPro" id="IPR012281">
    <property type="entry name" value="Phospholipid_synth_PlsX-like"/>
</dbReference>
<dbReference type="NCBIfam" id="TIGR00182">
    <property type="entry name" value="plsX"/>
    <property type="match status" value="1"/>
</dbReference>
<dbReference type="PANTHER" id="PTHR30100">
    <property type="entry name" value="FATTY ACID/PHOSPHOLIPID SYNTHESIS PROTEIN PLSX"/>
    <property type="match status" value="1"/>
</dbReference>
<dbReference type="PANTHER" id="PTHR30100:SF1">
    <property type="entry name" value="PHOSPHATE ACYLTRANSFERASE"/>
    <property type="match status" value="1"/>
</dbReference>
<dbReference type="Pfam" id="PF02504">
    <property type="entry name" value="FA_synthesis"/>
    <property type="match status" value="1"/>
</dbReference>
<dbReference type="PIRSF" id="PIRSF002465">
    <property type="entry name" value="Phsphlp_syn_PlsX"/>
    <property type="match status" value="1"/>
</dbReference>
<dbReference type="SUPFAM" id="SSF53659">
    <property type="entry name" value="Isocitrate/Isopropylmalate dehydrogenase-like"/>
    <property type="match status" value="1"/>
</dbReference>